<protein>
    <recommendedName>
        <fullName>Neogenin</fullName>
    </recommendedName>
    <alternativeName>
        <fullName>Immunoglobulin superfamily DCC subclass member 2</fullName>
    </alternativeName>
</protein>
<evidence type="ECO:0000250" key="1"/>
<evidence type="ECO:0000250" key="2">
    <source>
        <dbReference type="UniProtKB" id="P97798"/>
    </source>
</evidence>
<evidence type="ECO:0000255" key="3"/>
<evidence type="ECO:0000255" key="4">
    <source>
        <dbReference type="PROSITE-ProRule" id="PRU00114"/>
    </source>
</evidence>
<evidence type="ECO:0000255" key="5">
    <source>
        <dbReference type="PROSITE-ProRule" id="PRU00316"/>
    </source>
</evidence>
<evidence type="ECO:0000256" key="6">
    <source>
        <dbReference type="SAM" id="MobiDB-lite"/>
    </source>
</evidence>
<evidence type="ECO:0000269" key="7">
    <source>
    </source>
</evidence>
<evidence type="ECO:0000269" key="8">
    <source>
    </source>
</evidence>
<evidence type="ECO:0000269" key="9">
    <source>
    </source>
</evidence>
<evidence type="ECO:0000269" key="10">
    <source>
    </source>
</evidence>
<evidence type="ECO:0000303" key="11">
    <source>
    </source>
</evidence>
<evidence type="ECO:0000303" key="12">
    <source>
    </source>
</evidence>
<evidence type="ECO:0000303" key="13">
    <source>
    </source>
</evidence>
<evidence type="ECO:0000305" key="14"/>
<evidence type="ECO:0007744" key="15">
    <source>
    </source>
</evidence>
<evidence type="ECO:0007744" key="16">
    <source>
    </source>
</evidence>
<evidence type="ECO:0007829" key="17">
    <source>
        <dbReference type="PDB" id="1X5F"/>
    </source>
</evidence>
<evidence type="ECO:0007829" key="18">
    <source>
        <dbReference type="PDB" id="1X5G"/>
    </source>
</evidence>
<evidence type="ECO:0007829" key="19">
    <source>
        <dbReference type="PDB" id="1X5H"/>
    </source>
</evidence>
<evidence type="ECO:0007829" key="20">
    <source>
        <dbReference type="PDB" id="1X5I"/>
    </source>
</evidence>
<evidence type="ECO:0007829" key="21">
    <source>
        <dbReference type="PDB" id="1X5J"/>
    </source>
</evidence>
<evidence type="ECO:0007829" key="22">
    <source>
        <dbReference type="PDB" id="1X5K"/>
    </source>
</evidence>
<evidence type="ECO:0007829" key="23">
    <source>
        <dbReference type="PDB" id="3P4L"/>
    </source>
</evidence>
<reference key="1">
    <citation type="journal article" date="1997" name="Oncogene">
        <title>Identification and characterization of neogenin, a DCC-related gene.</title>
        <authorList>
            <person name="Meyerhardt J.A."/>
            <person name="Look A.T."/>
            <person name="Bigner S.H."/>
            <person name="Fearon E.R."/>
        </authorList>
    </citation>
    <scope>NUCLEOTIDE SEQUENCE [MRNA] (ISOFORMS 1 AND 2)</scope>
    <source>
        <tissue>Fetal brain</tissue>
    </source>
</reference>
<reference key="2">
    <citation type="journal article" date="1997" name="Genomics">
        <title>Molecular characterization of human neogenin, a DCC-related protein, and the mapping of its gene (NEO1) to chromosomal position 15q22.3-q23.</title>
        <authorList>
            <person name="Vielmetter J."/>
            <person name="Chen X.-N."/>
            <person name="Miskevich F."/>
            <person name="Lane R.P."/>
            <person name="Yamakawa K."/>
            <person name="Korenberg J.R."/>
            <person name="Dreyer W.J."/>
        </authorList>
    </citation>
    <scope>NUCLEOTIDE SEQUENCE [MRNA] (ISOFORMS 1 AND 2)</scope>
    <source>
        <tissue>Fetal brain</tissue>
    </source>
</reference>
<reference key="3">
    <citation type="journal article" date="2006" name="Nature">
        <title>Analysis of the DNA sequence and duplication history of human chromosome 15.</title>
        <authorList>
            <person name="Zody M.C."/>
            <person name="Garber M."/>
            <person name="Sharpe T."/>
            <person name="Young S.K."/>
            <person name="Rowen L."/>
            <person name="O'Neill K."/>
            <person name="Whittaker C.A."/>
            <person name="Kamal M."/>
            <person name="Chang J.L."/>
            <person name="Cuomo C.A."/>
            <person name="Dewar K."/>
            <person name="FitzGerald M.G."/>
            <person name="Kodira C.D."/>
            <person name="Madan A."/>
            <person name="Qin S."/>
            <person name="Yang X."/>
            <person name="Abbasi N."/>
            <person name="Abouelleil A."/>
            <person name="Arachchi H.M."/>
            <person name="Baradarani L."/>
            <person name="Birditt B."/>
            <person name="Bloom S."/>
            <person name="Bloom T."/>
            <person name="Borowsky M.L."/>
            <person name="Burke J."/>
            <person name="Butler J."/>
            <person name="Cook A."/>
            <person name="DeArellano K."/>
            <person name="DeCaprio D."/>
            <person name="Dorris L. III"/>
            <person name="Dors M."/>
            <person name="Eichler E.E."/>
            <person name="Engels R."/>
            <person name="Fahey J."/>
            <person name="Fleetwood P."/>
            <person name="Friedman C."/>
            <person name="Gearin G."/>
            <person name="Hall J.L."/>
            <person name="Hensley G."/>
            <person name="Johnson E."/>
            <person name="Jones C."/>
            <person name="Kamat A."/>
            <person name="Kaur A."/>
            <person name="Locke D.P."/>
            <person name="Madan A."/>
            <person name="Munson G."/>
            <person name="Jaffe D.B."/>
            <person name="Lui A."/>
            <person name="Macdonald P."/>
            <person name="Mauceli E."/>
            <person name="Naylor J.W."/>
            <person name="Nesbitt R."/>
            <person name="Nicol R."/>
            <person name="O'Leary S.B."/>
            <person name="Ratcliffe A."/>
            <person name="Rounsley S."/>
            <person name="She X."/>
            <person name="Sneddon K.M.B."/>
            <person name="Stewart S."/>
            <person name="Sougnez C."/>
            <person name="Stone S.M."/>
            <person name="Topham K."/>
            <person name="Vincent D."/>
            <person name="Wang S."/>
            <person name="Zimmer A.R."/>
            <person name="Birren B.W."/>
            <person name="Hood L."/>
            <person name="Lander E.S."/>
            <person name="Nusbaum C."/>
        </authorList>
    </citation>
    <scope>NUCLEOTIDE SEQUENCE [LARGE SCALE GENOMIC DNA]</scope>
</reference>
<reference key="4">
    <citation type="journal article" date="2004" name="Genome Res.">
        <title>The status, quality, and expansion of the NIH full-length cDNA project: the Mammalian Gene Collection (MGC).</title>
        <authorList>
            <consortium name="The MGC Project Team"/>
        </authorList>
    </citation>
    <scope>NUCLEOTIDE SEQUENCE [LARGE SCALE MRNA] (ISOFORMS 1; 3 AND 4)</scope>
    <source>
        <tissue>Brain</tissue>
    </source>
</reference>
<reference key="5">
    <citation type="journal article" date="2005" name="J. Proteome Res.">
        <title>Human plasma N-glycoproteome analysis by immunoaffinity subtraction, hydrazide chemistry, and mass spectrometry.</title>
        <authorList>
            <person name="Liu T."/>
            <person name="Qian W.-J."/>
            <person name="Gritsenko M.A."/>
            <person name="Camp D.G. II"/>
            <person name="Monroe M.E."/>
            <person name="Moore R.J."/>
            <person name="Smith R.D."/>
        </authorList>
    </citation>
    <scope>GLYCOSYLATION [LARGE SCALE ANALYSIS] AT ASN-210 AND ASN-489</scope>
    <source>
        <tissue>Plasma</tissue>
    </source>
</reference>
<reference key="6">
    <citation type="journal article" date="2007" name="Int. J. Biochem. Cell Biol.">
        <title>Neogenin: A multi-functional receptor regulating diverse developmental processes.</title>
        <authorList>
            <person name="Cole S.J."/>
            <person name="Bradford D."/>
            <person name="Cooper H.M."/>
        </authorList>
    </citation>
    <scope>REVIEW</scope>
</reference>
<reference key="7">
    <citation type="journal article" date="2008" name="Am. J. Physiol.">
        <title>Selective binding of RGMc/hemojuvelin, a key protein in systemic iron metabolism, to BMP-2 and neogenin.</title>
        <authorList>
            <person name="Kuns-Hashimoto R."/>
            <person name="Kuninger D."/>
            <person name="Nili M."/>
            <person name="Rotwein P."/>
        </authorList>
    </citation>
    <scope>INTERACTION WITH RBMC</scope>
</reference>
<reference key="8">
    <citation type="journal article" date="2009" name="Nat. Biotechnol.">
        <title>Mass-spectrometric identification and relative quantification of N-linked cell surface glycoproteins.</title>
        <authorList>
            <person name="Wollscheid B."/>
            <person name="Bausch-Fluck D."/>
            <person name="Henderson C."/>
            <person name="O'Brien R."/>
            <person name="Bibel M."/>
            <person name="Schiess R."/>
            <person name="Aebersold R."/>
            <person name="Watts J.D."/>
        </authorList>
    </citation>
    <scope>GLYCOSYLATION [LARGE SCALE ANALYSIS] AT ASN-210; ASN-470 AND ASN-639</scope>
    <source>
        <tissue>Leukemic T-cell</tissue>
    </source>
</reference>
<reference key="9">
    <citation type="journal article" date="2009" name="Sci. Signal.">
        <title>Quantitative phosphoproteomic analysis of T cell receptor signaling reveals system-wide modulation of protein-protein interactions.</title>
        <authorList>
            <person name="Mayya V."/>
            <person name="Lundgren D.H."/>
            <person name="Hwang S.-I."/>
            <person name="Rezaul K."/>
            <person name="Wu L."/>
            <person name="Eng J.K."/>
            <person name="Rodionov V."/>
            <person name="Han D.K."/>
        </authorList>
    </citation>
    <scope>IDENTIFICATION BY MASS SPECTROMETRY [LARGE SCALE ANALYSIS]</scope>
    <source>
        <tissue>Leukemic T-cell</tissue>
    </source>
</reference>
<reference key="10">
    <citation type="journal article" date="2011" name="J. Biol. Chem.">
        <title>Neogenin, a receptor for bone morphogenetic proteins.</title>
        <authorList>
            <person name="Hagihara M."/>
            <person name="Endo M."/>
            <person name="Hata K."/>
            <person name="Higuchi C."/>
            <person name="Takaoka K."/>
            <person name="Yoshikawa H."/>
            <person name="Yamashita T."/>
        </authorList>
    </citation>
    <scope>FUNCTION</scope>
    <scope>INTERACTION WITH BMP FAMILY MEMBERS</scope>
    <scope>MISCELLANEOUS</scope>
</reference>
<reference key="11">
    <citation type="journal article" date="2013" name="J. Proteome Res.">
        <title>Toward a comprehensive characterization of a human cancer cell phosphoproteome.</title>
        <authorList>
            <person name="Zhou H."/>
            <person name="Di Palma S."/>
            <person name="Preisinger C."/>
            <person name="Peng M."/>
            <person name="Polat A.N."/>
            <person name="Heck A.J."/>
            <person name="Mohammed S."/>
        </authorList>
    </citation>
    <scope>PHOSPHORYLATION [LARGE SCALE ANALYSIS] AT THR-1198; SER-1401; THR-1404 AND SER-1434</scope>
    <scope>IDENTIFICATION BY MASS SPECTROMETRY [LARGE SCALE ANALYSIS]</scope>
    <source>
        <tissue>Cervix carcinoma</tissue>
    </source>
</reference>
<reference key="12">
    <citation type="journal article" date="2014" name="J. Proteomics">
        <title>An enzyme assisted RP-RPLC approach for in-depth analysis of human liver phosphoproteome.</title>
        <authorList>
            <person name="Bian Y."/>
            <person name="Song C."/>
            <person name="Cheng K."/>
            <person name="Dong M."/>
            <person name="Wang F."/>
            <person name="Huang J."/>
            <person name="Sun D."/>
            <person name="Wang L."/>
            <person name="Ye M."/>
            <person name="Zou H."/>
        </authorList>
    </citation>
    <scope>PHOSPHORYLATION [LARGE SCALE ANALYSIS] AT SER-1194</scope>
    <scope>IDENTIFICATION BY MASS SPECTROMETRY [LARGE SCALE ANALYSIS]</scope>
    <source>
        <tissue>Liver</tissue>
    </source>
</reference>
<reference key="13">
    <citation type="submission" date="2005-11" db="PDB data bank">
        <title>The solution structure of the six fibronectin type III domains of human neogenin.</title>
        <authorList>
            <consortium name="RIKEN structural genomics initiative (RSGI)"/>
        </authorList>
    </citation>
    <scope>STRUCTURE BY NMR OF 429-1054</scope>
</reference>
<feature type="signal peptide" evidence="3">
    <location>
        <begin position="1"/>
        <end position="33"/>
    </location>
</feature>
<feature type="chain" id="PRO_0000015043" description="Neogenin">
    <location>
        <begin position="34"/>
        <end position="1461"/>
    </location>
</feature>
<feature type="topological domain" description="Extracellular" evidence="3">
    <location>
        <begin position="34"/>
        <end position="1105"/>
    </location>
</feature>
<feature type="transmembrane region" description="Helical" evidence="3">
    <location>
        <begin position="1106"/>
        <end position="1126"/>
    </location>
</feature>
<feature type="topological domain" description="Cytoplasmic" evidence="3">
    <location>
        <begin position="1127"/>
        <end position="1461"/>
    </location>
</feature>
<feature type="domain" description="Ig-like C2-type 1">
    <location>
        <begin position="52"/>
        <end position="141"/>
    </location>
</feature>
<feature type="domain" description="Ig-like C2-type 2">
    <location>
        <begin position="152"/>
        <end position="238"/>
    </location>
</feature>
<feature type="domain" description="Ig-like C2-type 3">
    <location>
        <begin position="243"/>
        <end position="336"/>
    </location>
</feature>
<feature type="domain" description="Ig-like C2-type 4">
    <location>
        <begin position="341"/>
        <end position="426"/>
    </location>
</feature>
<feature type="domain" description="Fibronectin type-III 1" evidence="5">
    <location>
        <begin position="441"/>
        <end position="535"/>
    </location>
</feature>
<feature type="domain" description="Fibronectin type-III 2" evidence="5">
    <location>
        <begin position="541"/>
        <end position="631"/>
    </location>
</feature>
<feature type="domain" description="Fibronectin type-III 3" evidence="5">
    <location>
        <begin position="636"/>
        <end position="731"/>
    </location>
</feature>
<feature type="domain" description="Fibronectin type-III 4" evidence="5">
    <location>
        <begin position="741"/>
        <end position="831"/>
    </location>
</feature>
<feature type="domain" description="Fibronectin type-III 5" evidence="5">
    <location>
        <begin position="856"/>
        <end position="952"/>
    </location>
</feature>
<feature type="domain" description="Fibronectin type-III 6" evidence="5">
    <location>
        <begin position="957"/>
        <end position="1054"/>
    </location>
</feature>
<feature type="region of interest" description="Disordered" evidence="6">
    <location>
        <begin position="1041"/>
        <end position="1097"/>
    </location>
</feature>
<feature type="region of interest" description="Disordered" evidence="6">
    <location>
        <begin position="1138"/>
        <end position="1160"/>
    </location>
</feature>
<feature type="region of interest" description="Disordered" evidence="6">
    <location>
        <begin position="1174"/>
        <end position="1206"/>
    </location>
</feature>
<feature type="region of interest" description="Disordered" evidence="6">
    <location>
        <begin position="1235"/>
        <end position="1276"/>
    </location>
</feature>
<feature type="region of interest" description="Disordered" evidence="6">
    <location>
        <begin position="1289"/>
        <end position="1381"/>
    </location>
</feature>
<feature type="compositionally biased region" description="Basic and acidic residues" evidence="6">
    <location>
        <begin position="1052"/>
        <end position="1061"/>
    </location>
</feature>
<feature type="compositionally biased region" description="Polar residues" evidence="6">
    <location>
        <begin position="1087"/>
        <end position="1097"/>
    </location>
</feature>
<feature type="compositionally biased region" description="Polar residues" evidence="6">
    <location>
        <begin position="1191"/>
        <end position="1206"/>
    </location>
</feature>
<feature type="compositionally biased region" description="Polar residues" evidence="6">
    <location>
        <begin position="1289"/>
        <end position="1322"/>
    </location>
</feature>
<feature type="compositionally biased region" description="Polar residues" evidence="6">
    <location>
        <begin position="1330"/>
        <end position="1349"/>
    </location>
</feature>
<feature type="compositionally biased region" description="Pro residues" evidence="6">
    <location>
        <begin position="1366"/>
        <end position="1375"/>
    </location>
</feature>
<feature type="modified residue" description="Phosphoserine" evidence="2">
    <location>
        <position position="1178"/>
    </location>
</feature>
<feature type="modified residue" description="Phosphoserine" evidence="16">
    <location>
        <position position="1194"/>
    </location>
</feature>
<feature type="modified residue" description="Phosphothreonine" evidence="15">
    <location>
        <position position="1198"/>
    </location>
</feature>
<feature type="modified residue" description="Phosphoserine" evidence="15">
    <location>
        <position position="1401"/>
    </location>
</feature>
<feature type="modified residue" description="Phosphothreonine" evidence="15">
    <location>
        <position position="1404"/>
    </location>
</feature>
<feature type="modified residue" description="Phosphoserine" evidence="2">
    <location>
        <position position="1432"/>
    </location>
</feature>
<feature type="modified residue" description="Phosphoserine" evidence="15">
    <location>
        <position position="1434"/>
    </location>
</feature>
<feature type="modified residue" description="Phosphoserine" evidence="2">
    <location>
        <position position="1435"/>
    </location>
</feature>
<feature type="glycosylation site" description="N-linked (GlcNAc...) asparagine" evidence="3">
    <location>
        <position position="73"/>
    </location>
</feature>
<feature type="glycosylation site" description="N-linked (GlcNAc...) asparagine" evidence="7 9">
    <location>
        <position position="210"/>
    </location>
</feature>
<feature type="glycosylation site" description="N-linked (GlcNAc...) asparagine" evidence="3">
    <location>
        <position position="326"/>
    </location>
</feature>
<feature type="glycosylation site" description="N-linked (GlcNAc...) asparagine" evidence="9">
    <location>
        <position position="470"/>
    </location>
</feature>
<feature type="glycosylation site" description="N-linked (GlcNAc...) asparagine" evidence="7">
    <location>
        <position position="489"/>
    </location>
</feature>
<feature type="glycosylation site" description="N-linked (GlcNAc...) asparagine" evidence="9">
    <location>
        <position position="639"/>
    </location>
</feature>
<feature type="glycosylation site" description="N-linked (GlcNAc...) asparagine" evidence="3">
    <location>
        <position position="715"/>
    </location>
</feature>
<feature type="glycosylation site" description="N-linked (GlcNAc...) asparagine" evidence="3">
    <location>
        <position position="909"/>
    </location>
</feature>
<feature type="disulfide bond" evidence="4">
    <location>
        <begin position="74"/>
        <end position="129"/>
    </location>
</feature>
<feature type="disulfide bond" evidence="4">
    <location>
        <begin position="173"/>
        <end position="221"/>
    </location>
</feature>
<feature type="disulfide bond" evidence="4">
    <location>
        <begin position="270"/>
        <end position="320"/>
    </location>
</feature>
<feature type="disulfide bond" evidence="4">
    <location>
        <begin position="362"/>
        <end position="410"/>
    </location>
</feature>
<feature type="splice variant" id="VSP_047134" description="In isoform 4." evidence="11">
    <location>
        <begin position="1054"/>
        <end position="1064"/>
    </location>
</feature>
<feature type="splice variant" id="VSP_043330" description="In isoform 3." evidence="11">
    <original>PVISAHPIHSLDNPHHHFHSSSLASPARSHLYHPGSPWPIGTSMSLSDRANSTE</original>
    <variation>Q</variation>
    <location>
        <begin position="1248"/>
        <end position="1301"/>
    </location>
</feature>
<feature type="splice variant" id="VSP_002593" description="In isoform 2." evidence="12 13">
    <location>
        <begin position="1248"/>
        <end position="1300"/>
    </location>
</feature>
<feature type="sequence variant" id="VAR_027954" description="In dbSNP:rs4467039.">
    <original>P</original>
    <variation>L</variation>
    <location>
        <position position="534"/>
    </location>
</feature>
<feature type="sequence conflict" description="In Ref. 1; AAB17263." evidence="14" ref="1">
    <original>N</original>
    <variation>G</variation>
    <location>
        <position position="168"/>
    </location>
</feature>
<feature type="strand" evidence="17">
    <location>
        <begin position="443"/>
        <end position="450"/>
    </location>
</feature>
<feature type="strand" evidence="17">
    <location>
        <begin position="455"/>
        <end position="460"/>
    </location>
</feature>
<feature type="strand" evidence="17">
    <location>
        <begin position="470"/>
        <end position="479"/>
    </location>
</feature>
<feature type="strand" evidence="17">
    <location>
        <begin position="486"/>
        <end position="489"/>
    </location>
</feature>
<feature type="strand" evidence="17">
    <location>
        <begin position="496"/>
        <end position="500"/>
    </location>
</feature>
<feature type="strand" evidence="17">
    <location>
        <begin position="508"/>
        <end position="516"/>
    </location>
</feature>
<feature type="strand" evidence="17">
    <location>
        <begin position="521"/>
        <end position="524"/>
    </location>
</feature>
<feature type="strand" evidence="17">
    <location>
        <begin position="528"/>
        <end position="531"/>
    </location>
</feature>
<feature type="strand" evidence="18">
    <location>
        <begin position="546"/>
        <end position="551"/>
    </location>
</feature>
<feature type="strand" evidence="18">
    <location>
        <begin position="554"/>
        <end position="558"/>
    </location>
</feature>
<feature type="strand" evidence="18">
    <location>
        <begin position="570"/>
        <end position="578"/>
    </location>
</feature>
<feature type="strand" evidence="18">
    <location>
        <begin position="587"/>
        <end position="589"/>
    </location>
</feature>
<feature type="strand" evidence="18">
    <location>
        <begin position="591"/>
        <end position="596"/>
    </location>
</feature>
<feature type="strand" evidence="18">
    <location>
        <begin position="604"/>
        <end position="612"/>
    </location>
</feature>
<feature type="strand" evidence="19">
    <location>
        <begin position="638"/>
        <end position="643"/>
    </location>
</feature>
<feature type="strand" evidence="19">
    <location>
        <begin position="646"/>
        <end position="655"/>
    </location>
</feature>
<feature type="turn" evidence="19">
    <location>
        <begin position="659"/>
        <end position="661"/>
    </location>
</feature>
<feature type="strand" evidence="19">
    <location>
        <begin position="666"/>
        <end position="670"/>
    </location>
</feature>
<feature type="strand" evidence="19">
    <location>
        <begin position="672"/>
        <end position="675"/>
    </location>
</feature>
<feature type="strand" evidence="19">
    <location>
        <begin position="678"/>
        <end position="683"/>
    </location>
</feature>
<feature type="strand" evidence="19">
    <location>
        <begin position="693"/>
        <end position="697"/>
    </location>
</feature>
<feature type="strand" evidence="19">
    <location>
        <begin position="704"/>
        <end position="708"/>
    </location>
</feature>
<feature type="strand" evidence="19">
    <location>
        <begin position="710"/>
        <end position="713"/>
    </location>
</feature>
<feature type="strand" evidence="19">
    <location>
        <begin position="716"/>
        <end position="720"/>
    </location>
</feature>
<feature type="strand" evidence="19">
    <location>
        <begin position="724"/>
        <end position="727"/>
    </location>
</feature>
<feature type="strand" evidence="20">
    <location>
        <begin position="743"/>
        <end position="750"/>
    </location>
</feature>
<feature type="strand" evidence="20">
    <location>
        <begin position="753"/>
        <end position="759"/>
    </location>
</feature>
<feature type="strand" evidence="20">
    <location>
        <begin position="770"/>
        <end position="775"/>
    </location>
</feature>
<feature type="helix" evidence="20">
    <location>
        <begin position="780"/>
        <end position="782"/>
    </location>
</feature>
<feature type="strand" evidence="20">
    <location>
        <begin position="783"/>
        <end position="786"/>
    </location>
</feature>
<feature type="strand" evidence="20">
    <location>
        <begin position="793"/>
        <end position="796"/>
    </location>
</feature>
<feature type="strand" evidence="20">
    <location>
        <begin position="808"/>
        <end position="812"/>
    </location>
</feature>
<feature type="strand" evidence="23">
    <location>
        <begin position="858"/>
        <end position="864"/>
    </location>
</feature>
<feature type="strand" evidence="23">
    <location>
        <begin position="866"/>
        <end position="868"/>
    </location>
</feature>
<feature type="strand" evidence="23">
    <location>
        <begin position="870"/>
        <end position="875"/>
    </location>
</feature>
<feature type="strand" evidence="21">
    <location>
        <begin position="881"/>
        <end position="883"/>
    </location>
</feature>
<feature type="strand" evidence="23">
    <location>
        <begin position="890"/>
        <end position="897"/>
    </location>
</feature>
<feature type="strand" evidence="23">
    <location>
        <begin position="906"/>
        <end position="917"/>
    </location>
</feature>
<feature type="strand" evidence="23">
    <location>
        <begin position="925"/>
        <end position="934"/>
    </location>
</feature>
<feature type="strand" evidence="23">
    <location>
        <begin position="945"/>
        <end position="948"/>
    </location>
</feature>
<feature type="strand" evidence="23">
    <location>
        <begin position="959"/>
        <end position="966"/>
    </location>
</feature>
<feature type="strand" evidence="23">
    <location>
        <begin position="969"/>
        <end position="978"/>
    </location>
</feature>
<feature type="strand" evidence="23">
    <location>
        <begin position="989"/>
        <end position="996"/>
    </location>
</feature>
<feature type="strand" evidence="22">
    <location>
        <begin position="998"/>
        <end position="1000"/>
    </location>
</feature>
<feature type="helix" evidence="23">
    <location>
        <begin position="1002"/>
        <end position="1004"/>
    </location>
</feature>
<feature type="strand" evidence="23">
    <location>
        <begin position="1005"/>
        <end position="1013"/>
    </location>
</feature>
<feature type="strand" evidence="23">
    <location>
        <begin position="1015"/>
        <end position="1019"/>
    </location>
</feature>
<feature type="strand" evidence="23">
    <location>
        <begin position="1027"/>
        <end position="1036"/>
    </location>
</feature>
<feature type="strand" evidence="23">
    <location>
        <begin position="1047"/>
        <end position="1050"/>
    </location>
</feature>
<comment type="function">
    <text evidence="10">Multi-functional cell surface receptor regulating cell adhesion in many diverse developmental processes, including neural tube and mammary gland formation, myogenesis and angiogenesis. Receptor for members of the BMP, netrin, and repulsive guidance molecule (RGM) families. Netrin-Neogenin interactions result in a chemoattractive axon guidance response and cell-cell adhesion, the interaction between NEO1/Neogenin and RGMa and RGMb induces a chemorepulsive response.</text>
</comment>
<comment type="subunit">
    <text evidence="1 8 10">Interacts with MYO10 (By similarity). Interacts with RGMA and RGMB. Interacts with BMP2, BMP4, BMP6, and BMP7.</text>
</comment>
<comment type="interaction">
    <interactant intactId="EBI-2829116">
        <id>Q92859</id>
    </interactant>
    <interactant intactId="EBI-10900704">
        <id>Q6ZVN8</id>
        <label>HJV</label>
    </interactant>
    <organismsDiffer>false</organismsDiffer>
    <experiments>3</experiments>
</comment>
<comment type="subcellular location">
    <subcellularLocation>
        <location>Cell membrane</location>
        <topology>Single-pass type I membrane protein</topology>
    </subcellularLocation>
</comment>
<comment type="alternative products">
    <event type="alternative splicing"/>
    <isoform>
        <id>Q92859-1</id>
        <name>1</name>
        <sequence type="displayed"/>
    </isoform>
    <isoform>
        <id>Q92859-2</id>
        <name>2</name>
        <sequence type="described" ref="VSP_002593"/>
    </isoform>
    <isoform>
        <id>Q92859-3</id>
        <name>3</name>
        <sequence type="described" ref="VSP_043330"/>
    </isoform>
    <isoform>
        <id>Q92859-4</id>
        <name>4</name>
        <sequence type="described" ref="VSP_047134"/>
    </isoform>
    <text>Additional isoforms seem to exist.</text>
</comment>
<comment type="tissue specificity">
    <text>Widely expressed and also in cancer cell lines.</text>
</comment>
<comment type="domain">
    <text evidence="1">The Fibronectin repeats 5 and 6 mediate interaction with RGM family molecules.</text>
</comment>
<comment type="miscellaneous">
    <text>Knockdown of NEO1 in C2C12 cells results in the enhancement of the BMP-2-induced processes of osteoblastic differentiation and phosphorylation of Smad1, Smad5, and Smad8. Conversely, overexpression suppresses these processes.</text>
</comment>
<comment type="similarity">
    <text evidence="14">Belongs to the immunoglobulin superfamily. DCC family.</text>
</comment>
<proteinExistence type="evidence at protein level"/>
<keyword id="KW-0002">3D-structure</keyword>
<keyword id="KW-0025">Alternative splicing</keyword>
<keyword id="KW-0130">Cell adhesion</keyword>
<keyword id="KW-1003">Cell membrane</keyword>
<keyword id="KW-1015">Disulfide bond</keyword>
<keyword id="KW-0325">Glycoprotein</keyword>
<keyword id="KW-0393">Immunoglobulin domain</keyword>
<keyword id="KW-0472">Membrane</keyword>
<keyword id="KW-0597">Phosphoprotein</keyword>
<keyword id="KW-1267">Proteomics identification</keyword>
<keyword id="KW-1185">Reference proteome</keyword>
<keyword id="KW-0677">Repeat</keyword>
<keyword id="KW-0732">Signal</keyword>
<keyword id="KW-0812">Transmembrane</keyword>
<keyword id="KW-1133">Transmembrane helix</keyword>
<sequence>MAAERGARRLLSTPSFWLYCLLLLGRRAPGAAAARSGSAPQSPGASIRTFTPFYFLVEPVDTLSVRGSSVILNCSAYSEPSPKIEWKKDGTFLNLVSDDRRQLLPDGSLFISNVVHSKHNKPDEGYYQCVATVESLGTIISRTAKLIVAGLPRFTSQPEPSSVYAGNNAILNCEVNADLVPFVRWEQNRQPLLLDDRVIKLPSGMLVISNATEGDGGLYRCVVESGGPPKYSDEVELKVLPDPEVISDLVFLKQPSPLVRVIGQDVVLPCVASGLPTPTIKWMKNEEALDTESSERLVLLAGGSLEISDVTEDDAGTYFCIADNGNETIEAQAELTVQAQPEFLKQPTNIYAHESMDIVFECEVTGKPTPTVKWVKNGDMVIPSDYFKIVKEHNLQVLGLVKSDEGFYQCIAENDVGNAQAGAQLIILEHAPATTGPLPSAPRDVVASLVSTRFIKLTWRTPASDPHGDNLTYSVFYTKEGIARERVENTSHPGEMQVTIQNLMPATVYIFRVMAQNKHGSGESSAPLRVETQPEVQLPGPAPNLRAYAASPTSITVTWETPVSGNGEIQNYKLYYMEKGTDKEQDVDVSSHSYTINGLKKYTEYSFRVVAYNKHGPGVSTPDVAVRTLSDVPSAAPQNLSLEVRNSKSIMIHWQPPAPATQNGQITGYKIRYRKASRKSDVTETLVSGTQLSQLIEGLDRGTEYNFRVAALTINGTGPATDWLSAETFESDLDETRVPEVPSSLHVRPLVTSIVVSWTPPENQNIVVRGYAIGYGIGSPHAQTIKVDYKQRYYTIENLDPSSHYVITLKAFNNVGEGIPLYESAVTRPHTDTSEVDLFVINAPYTPVPDPTPMMPPVGVQASILSHDTIRITWADNSLPKHQKITDSRYYTVRWKTNIPANTKYKNANATTLSYLVTGLKPNTLYEFSVMVTKGRRSSTWSMTAHGTTFELVPTSPPKDVTVVSKEGKPKTIIVNWQPPSEANGKITGYIIYYSTDVNAEIHDWVIEPVVGNRLTHQIQELTLDTPYYFKIQARNSKGMGPMSEAVQFRTPKADSSDKMPNDQASGSGGKGSRLPDLGSDYKPPMSGSNSPHGSPTSPLDSNMLLVIIVSVGVITIVVVVIIAVFCTRRTTSHQKKKRAACKSVNGSHKYKGNSKDVKPPDLWIHHERLELKPIDKSPDPNPIMTDTPIPRNSQDITPVDNSMDSNIHQRRNSYRGHESEDSMSTLAGRRGMRPKMMMPFDSQPPQPVISAHPIHSLDNPHHHFHSSSLASPARSHLYHPGSPWPIGTSMSLSDRANSTESVRNTPSTDTMPASSSQTCCTDHQDPEGATSSSYLASSQEEDSGQSLPTAHVRPSHPLKSFAVPAIPPPGPPTYDPALPSTPLLSQQALNHHIHSVKTASIGTLGRSRPPMPVVVPSAPEVQETTRMLEDSESSYEPDELTKEMAHLEGLMKDLNAITTA</sequence>
<accession>Q92859</accession>
<accession>B7ZKM9</accession>
<accession>B7ZKN0</accession>
<accession>O00340</accession>
<accession>Q17RX1</accession>
<name>NEO1_HUMAN</name>
<dbReference type="EMBL" id="U61262">
    <property type="protein sequence ID" value="AAB17263.1"/>
    <property type="molecule type" value="mRNA"/>
</dbReference>
<dbReference type="EMBL" id="U72391">
    <property type="protein sequence ID" value="AAC51287.1"/>
    <property type="molecule type" value="mRNA"/>
</dbReference>
<dbReference type="EMBL" id="AC068397">
    <property type="status" value="NOT_ANNOTATED_CDS"/>
    <property type="molecule type" value="Genomic_DNA"/>
</dbReference>
<dbReference type="EMBL" id="AC104420">
    <property type="status" value="NOT_ANNOTATED_CDS"/>
    <property type="molecule type" value="Genomic_DNA"/>
</dbReference>
<dbReference type="EMBL" id="AC129980">
    <property type="status" value="NOT_ANNOTATED_CDS"/>
    <property type="molecule type" value="Genomic_DNA"/>
</dbReference>
<dbReference type="EMBL" id="BC117161">
    <property type="protein sequence ID" value="AAI17162.1"/>
    <property type="molecule type" value="mRNA"/>
</dbReference>
<dbReference type="EMBL" id="BC143270">
    <property type="protein sequence ID" value="AAI43271.1"/>
    <property type="molecule type" value="mRNA"/>
</dbReference>
<dbReference type="EMBL" id="BC143271">
    <property type="protein sequence ID" value="AAI43272.1"/>
    <property type="molecule type" value="mRNA"/>
</dbReference>
<dbReference type="CCDS" id="CCDS10247.1">
    <molecule id="Q92859-1"/>
</dbReference>
<dbReference type="CCDS" id="CCDS53957.1">
    <molecule id="Q92859-3"/>
</dbReference>
<dbReference type="CCDS" id="CCDS58378.1">
    <molecule id="Q92859-4"/>
</dbReference>
<dbReference type="RefSeq" id="NP_001166094.1">
    <molecule id="Q92859-3"/>
    <property type="nucleotide sequence ID" value="NM_001172623.2"/>
</dbReference>
<dbReference type="RefSeq" id="NP_001166095.1">
    <molecule id="Q92859-4"/>
    <property type="nucleotide sequence ID" value="NM_001172624.2"/>
</dbReference>
<dbReference type="RefSeq" id="NP_002490.2">
    <molecule id="Q92859-1"/>
    <property type="nucleotide sequence ID" value="NM_002499.4"/>
</dbReference>
<dbReference type="RefSeq" id="XP_047288542.1">
    <molecule id="Q92859-1"/>
    <property type="nucleotide sequence ID" value="XM_047432586.1"/>
</dbReference>
<dbReference type="RefSeq" id="XP_047288549.1">
    <molecule id="Q92859-3"/>
    <property type="nucleotide sequence ID" value="XM_047432593.1"/>
</dbReference>
<dbReference type="RefSeq" id="XP_054234004.1">
    <molecule id="Q92859-1"/>
    <property type="nucleotide sequence ID" value="XM_054378029.1"/>
</dbReference>
<dbReference type="RefSeq" id="XP_054234018.1">
    <molecule id="Q92859-3"/>
    <property type="nucleotide sequence ID" value="XM_054378043.1"/>
</dbReference>
<dbReference type="PDB" id="1X5F">
    <property type="method" value="NMR"/>
    <property type="chains" value="A=429-535"/>
</dbReference>
<dbReference type="PDB" id="1X5G">
    <property type="method" value="NMR"/>
    <property type="chains" value="A=529-631"/>
</dbReference>
<dbReference type="PDB" id="1X5H">
    <property type="method" value="NMR"/>
    <property type="chains" value="A=623-741"/>
</dbReference>
<dbReference type="PDB" id="1X5I">
    <property type="method" value="NMR"/>
    <property type="chains" value="A=719-831"/>
</dbReference>
<dbReference type="PDB" id="1X5J">
    <property type="method" value="NMR"/>
    <property type="chains" value="A=853-952"/>
</dbReference>
<dbReference type="PDB" id="1X5K">
    <property type="method" value="NMR"/>
    <property type="chains" value="A=944-1054"/>
</dbReference>
<dbReference type="PDB" id="3P4L">
    <property type="method" value="X-ray"/>
    <property type="resolution" value="1.80 A"/>
    <property type="chains" value="A=853-1054"/>
</dbReference>
<dbReference type="PDBsum" id="1X5F"/>
<dbReference type="PDBsum" id="1X5G"/>
<dbReference type="PDBsum" id="1X5H"/>
<dbReference type="PDBsum" id="1X5I"/>
<dbReference type="PDBsum" id="1X5J"/>
<dbReference type="PDBsum" id="1X5K"/>
<dbReference type="PDBsum" id="3P4L"/>
<dbReference type="BMRB" id="Q92859"/>
<dbReference type="SMR" id="Q92859"/>
<dbReference type="BioGRID" id="110830">
    <property type="interactions" value="48"/>
</dbReference>
<dbReference type="DIP" id="DIP-46272N"/>
<dbReference type="FunCoup" id="Q92859">
    <property type="interactions" value="1552"/>
</dbReference>
<dbReference type="IntAct" id="Q92859">
    <property type="interactions" value="25"/>
</dbReference>
<dbReference type="MINT" id="Q92859"/>
<dbReference type="STRING" id="9606.ENSP00000341198"/>
<dbReference type="GlyConnect" id="1539">
    <property type="glycosylation" value="10 N-Linked glycans (5 sites)"/>
</dbReference>
<dbReference type="GlyCosmos" id="Q92859">
    <property type="glycosylation" value="12 sites, 12 glycans"/>
</dbReference>
<dbReference type="GlyGen" id="Q92859">
    <property type="glycosylation" value="16 sites, 24 N-linked glycans (8 sites), 4 O-linked glycans (4 sites)"/>
</dbReference>
<dbReference type="iPTMnet" id="Q92859"/>
<dbReference type="PhosphoSitePlus" id="Q92859"/>
<dbReference type="SwissPalm" id="Q92859"/>
<dbReference type="BioMuta" id="NEO1"/>
<dbReference type="DMDM" id="116242676"/>
<dbReference type="jPOST" id="Q92859"/>
<dbReference type="MassIVE" id="Q92859"/>
<dbReference type="PaxDb" id="9606-ENSP00000341198"/>
<dbReference type="PeptideAtlas" id="Q92859"/>
<dbReference type="ProteomicsDB" id="7185"/>
<dbReference type="ProteomicsDB" id="75552">
    <molecule id="Q92859-1"/>
</dbReference>
<dbReference type="ProteomicsDB" id="75553">
    <molecule id="Q92859-2"/>
</dbReference>
<dbReference type="ProteomicsDB" id="75554">
    <molecule id="Q92859-3"/>
</dbReference>
<dbReference type="Pumba" id="Q92859"/>
<dbReference type="Antibodypedia" id="3989">
    <property type="antibodies" value="193 antibodies from 27 providers"/>
</dbReference>
<dbReference type="DNASU" id="4756"/>
<dbReference type="Ensembl" id="ENST00000261908.11">
    <molecule id="Q92859-1"/>
    <property type="protein sequence ID" value="ENSP00000261908.6"/>
    <property type="gene ID" value="ENSG00000067141.17"/>
</dbReference>
<dbReference type="Ensembl" id="ENST00000339362.9">
    <molecule id="Q92859-1"/>
    <property type="protein sequence ID" value="ENSP00000341198.5"/>
    <property type="gene ID" value="ENSG00000067141.17"/>
</dbReference>
<dbReference type="Ensembl" id="ENST00000558964.5">
    <molecule id="Q92859-4"/>
    <property type="protein sequence ID" value="ENSP00000453200.1"/>
    <property type="gene ID" value="ENSG00000067141.17"/>
</dbReference>
<dbReference type="Ensembl" id="ENST00000560262.5">
    <molecule id="Q92859-3"/>
    <property type="protein sequence ID" value="ENSP00000453317.1"/>
    <property type="gene ID" value="ENSG00000067141.17"/>
</dbReference>
<dbReference type="GeneID" id="4756"/>
<dbReference type="KEGG" id="hsa:4756"/>
<dbReference type="MANE-Select" id="ENST00000261908.11">
    <property type="protein sequence ID" value="ENSP00000261908.6"/>
    <property type="RefSeq nucleotide sequence ID" value="NM_002499.4"/>
    <property type="RefSeq protein sequence ID" value="NP_002490.2"/>
</dbReference>
<dbReference type="UCSC" id="uc002avm.4">
    <molecule id="Q92859-1"/>
    <property type="organism name" value="human"/>
</dbReference>
<dbReference type="AGR" id="HGNC:7754"/>
<dbReference type="CTD" id="4756"/>
<dbReference type="DisGeNET" id="4756"/>
<dbReference type="GeneCards" id="NEO1"/>
<dbReference type="HGNC" id="HGNC:7754">
    <property type="gene designation" value="NEO1"/>
</dbReference>
<dbReference type="HPA" id="ENSG00000067141">
    <property type="expression patterns" value="Low tissue specificity"/>
</dbReference>
<dbReference type="MIM" id="601907">
    <property type="type" value="gene"/>
</dbReference>
<dbReference type="neXtProt" id="NX_Q92859"/>
<dbReference type="OpenTargets" id="ENSG00000067141"/>
<dbReference type="PharmGKB" id="PA31555"/>
<dbReference type="VEuPathDB" id="HostDB:ENSG00000067141"/>
<dbReference type="eggNOG" id="KOG4221">
    <property type="taxonomic scope" value="Eukaryota"/>
</dbReference>
<dbReference type="GeneTree" id="ENSGT00940000156684"/>
<dbReference type="InParanoid" id="Q92859"/>
<dbReference type="OMA" id="NDVGNTQ"/>
<dbReference type="OrthoDB" id="114660at2759"/>
<dbReference type="PAN-GO" id="Q92859">
    <property type="GO annotations" value="6 GO annotations based on evolutionary models"/>
</dbReference>
<dbReference type="PhylomeDB" id="Q92859"/>
<dbReference type="TreeFam" id="TF321506"/>
<dbReference type="PathwayCommons" id="Q92859"/>
<dbReference type="Reactome" id="R-HSA-373752">
    <property type="pathway name" value="Netrin-1 signaling"/>
</dbReference>
<dbReference type="Reactome" id="R-HSA-525793">
    <property type="pathway name" value="Myogenesis"/>
</dbReference>
<dbReference type="SignaLink" id="Q92859"/>
<dbReference type="SIGNOR" id="Q92859"/>
<dbReference type="BioGRID-ORCS" id="4756">
    <property type="hits" value="17 hits in 1159 CRISPR screens"/>
</dbReference>
<dbReference type="CD-CODE" id="FB4E32DD">
    <property type="entry name" value="Presynaptic clusters and postsynaptic densities"/>
</dbReference>
<dbReference type="ChiTaRS" id="NEO1">
    <property type="organism name" value="human"/>
</dbReference>
<dbReference type="EvolutionaryTrace" id="Q92859"/>
<dbReference type="GeneWiki" id="NEO1"/>
<dbReference type="GenomeRNAi" id="4756"/>
<dbReference type="Pharos" id="Q92859">
    <property type="development level" value="Tbio"/>
</dbReference>
<dbReference type="PRO" id="PR:Q92859"/>
<dbReference type="Proteomes" id="UP000005640">
    <property type="component" value="Chromosome 15"/>
</dbReference>
<dbReference type="RNAct" id="Q92859">
    <property type="molecule type" value="protein"/>
</dbReference>
<dbReference type="Bgee" id="ENSG00000067141">
    <property type="expression patterns" value="Expressed in cortical plate and 194 other cell types or tissues"/>
</dbReference>
<dbReference type="ExpressionAtlas" id="Q92859">
    <property type="expression patterns" value="baseline and differential"/>
</dbReference>
<dbReference type="GO" id="GO:0009986">
    <property type="term" value="C:cell surface"/>
    <property type="evidence" value="ECO:0000318"/>
    <property type="project" value="GO_Central"/>
</dbReference>
<dbReference type="GO" id="GO:0098978">
    <property type="term" value="C:glutamatergic synapse"/>
    <property type="evidence" value="ECO:0007669"/>
    <property type="project" value="Ensembl"/>
</dbReference>
<dbReference type="GO" id="GO:0005794">
    <property type="term" value="C:Golgi apparatus"/>
    <property type="evidence" value="ECO:0000314"/>
    <property type="project" value="HPA"/>
</dbReference>
<dbReference type="GO" id="GO:0030426">
    <property type="term" value="C:growth cone"/>
    <property type="evidence" value="ECO:0007669"/>
    <property type="project" value="Ensembl"/>
</dbReference>
<dbReference type="GO" id="GO:0097708">
    <property type="term" value="C:intracellular vesicle"/>
    <property type="evidence" value="ECO:0007669"/>
    <property type="project" value="Ensembl"/>
</dbReference>
<dbReference type="GO" id="GO:0005654">
    <property type="term" value="C:nucleoplasm"/>
    <property type="evidence" value="ECO:0000314"/>
    <property type="project" value="HPA"/>
</dbReference>
<dbReference type="GO" id="GO:0005886">
    <property type="term" value="C:plasma membrane"/>
    <property type="evidence" value="ECO:0000314"/>
    <property type="project" value="HPA"/>
</dbReference>
<dbReference type="GO" id="GO:0098797">
    <property type="term" value="C:plasma membrane protein complex"/>
    <property type="evidence" value="ECO:0000314"/>
    <property type="project" value="BHF-UCL"/>
</dbReference>
<dbReference type="GO" id="GO:0098839">
    <property type="term" value="C:postsynaptic density membrane"/>
    <property type="evidence" value="ECO:0007669"/>
    <property type="project" value="Ensembl"/>
</dbReference>
<dbReference type="GO" id="GO:0070700">
    <property type="term" value="F:BMP receptor binding"/>
    <property type="evidence" value="ECO:0007669"/>
    <property type="project" value="Ensembl"/>
</dbReference>
<dbReference type="GO" id="GO:0045296">
    <property type="term" value="F:cadherin binding"/>
    <property type="evidence" value="ECO:0007669"/>
    <property type="project" value="Ensembl"/>
</dbReference>
<dbReference type="GO" id="GO:0039706">
    <property type="term" value="F:co-receptor binding"/>
    <property type="evidence" value="ECO:0000353"/>
    <property type="project" value="BHF-UCL"/>
</dbReference>
<dbReference type="GO" id="GO:0038023">
    <property type="term" value="F:signaling receptor activity"/>
    <property type="evidence" value="ECO:0007669"/>
    <property type="project" value="Ensembl"/>
</dbReference>
<dbReference type="GO" id="GO:0007411">
    <property type="term" value="P:axon guidance"/>
    <property type="evidence" value="ECO:0000318"/>
    <property type="project" value="GO_Central"/>
</dbReference>
<dbReference type="GO" id="GO:0007155">
    <property type="term" value="P:cell adhesion"/>
    <property type="evidence" value="ECO:0000303"/>
    <property type="project" value="ProtInc"/>
</dbReference>
<dbReference type="GO" id="GO:0098609">
    <property type="term" value="P:cell-cell adhesion"/>
    <property type="evidence" value="ECO:0000318"/>
    <property type="project" value="GO_Central"/>
</dbReference>
<dbReference type="GO" id="GO:0006879">
    <property type="term" value="P:intracellular iron ion homeostasis"/>
    <property type="evidence" value="ECO:0007669"/>
    <property type="project" value="Ensembl"/>
</dbReference>
<dbReference type="GO" id="GO:0060586">
    <property type="term" value="P:multicellular organismal-level iron ion homeostasis"/>
    <property type="evidence" value="ECO:0000316"/>
    <property type="project" value="MGI"/>
</dbReference>
<dbReference type="GO" id="GO:0007520">
    <property type="term" value="P:myoblast fusion"/>
    <property type="evidence" value="ECO:0007669"/>
    <property type="project" value="Ensembl"/>
</dbReference>
<dbReference type="GO" id="GO:0048681">
    <property type="term" value="P:negative regulation of axon regeneration"/>
    <property type="evidence" value="ECO:0007669"/>
    <property type="project" value="Ensembl"/>
</dbReference>
<dbReference type="GO" id="GO:0050709">
    <property type="term" value="P:negative regulation of protein secretion"/>
    <property type="evidence" value="ECO:0007669"/>
    <property type="project" value="Ensembl"/>
</dbReference>
<dbReference type="GO" id="GO:0001764">
    <property type="term" value="P:neuron migration"/>
    <property type="evidence" value="ECO:0000318"/>
    <property type="project" value="GO_Central"/>
</dbReference>
<dbReference type="GO" id="GO:0030513">
    <property type="term" value="P:positive regulation of BMP signaling pathway"/>
    <property type="evidence" value="ECO:0007669"/>
    <property type="project" value="Ensembl"/>
</dbReference>
<dbReference type="GO" id="GO:0009306">
    <property type="term" value="P:protein secretion"/>
    <property type="evidence" value="ECO:0007669"/>
    <property type="project" value="Ensembl"/>
</dbReference>
<dbReference type="GO" id="GO:0006355">
    <property type="term" value="P:regulation of DNA-templated transcription"/>
    <property type="evidence" value="ECO:0007669"/>
    <property type="project" value="Ensembl"/>
</dbReference>
<dbReference type="GO" id="GO:0099550">
    <property type="term" value="P:trans-synaptic signaling, modulating synaptic transmission"/>
    <property type="evidence" value="ECO:0007669"/>
    <property type="project" value="Ensembl"/>
</dbReference>
<dbReference type="CDD" id="cd00063">
    <property type="entry name" value="FN3"/>
    <property type="match status" value="6"/>
</dbReference>
<dbReference type="CDD" id="cd00096">
    <property type="entry name" value="Ig"/>
    <property type="match status" value="1"/>
</dbReference>
<dbReference type="CDD" id="cd05722">
    <property type="entry name" value="IgI_1_Neogenin_like"/>
    <property type="match status" value="1"/>
</dbReference>
<dbReference type="CDD" id="cd05723">
    <property type="entry name" value="IgI_4_Neogenin_like"/>
    <property type="match status" value="1"/>
</dbReference>
<dbReference type="FunFam" id="2.60.40.10:FF:000004">
    <property type="entry name" value="DCC isoform 1"/>
    <property type="match status" value="2"/>
</dbReference>
<dbReference type="FunFam" id="2.60.40.10:FF:000316">
    <property type="entry name" value="Neogenin 1"/>
    <property type="match status" value="1"/>
</dbReference>
<dbReference type="FunFam" id="2.60.40.10:FF:000777">
    <property type="entry name" value="Neogenin 1"/>
    <property type="match status" value="1"/>
</dbReference>
<dbReference type="FunFam" id="2.60.40.10:FF:000101">
    <property type="entry name" value="Neogenin isoform 1"/>
    <property type="match status" value="1"/>
</dbReference>
<dbReference type="FunFam" id="2.60.40.10:FF:000106">
    <property type="entry name" value="Neogenin isoform 1"/>
    <property type="match status" value="1"/>
</dbReference>
<dbReference type="FunFam" id="2.60.40.10:FF:000133">
    <property type="entry name" value="Neogenin isoform 1"/>
    <property type="match status" value="1"/>
</dbReference>
<dbReference type="FunFam" id="2.60.40.10:FF:000189">
    <property type="entry name" value="Neogenin isoform 3"/>
    <property type="match status" value="1"/>
</dbReference>
<dbReference type="FunFam" id="2.60.40.10:FF:000216">
    <property type="entry name" value="neogenin isoform X1"/>
    <property type="match status" value="1"/>
</dbReference>
<dbReference type="FunFam" id="2.60.40.10:FF:000187">
    <property type="entry name" value="neogenin isoform X2"/>
    <property type="match status" value="1"/>
</dbReference>
<dbReference type="Gene3D" id="2.60.40.10">
    <property type="entry name" value="Immunoglobulins"/>
    <property type="match status" value="10"/>
</dbReference>
<dbReference type="InterPro" id="IPR003961">
    <property type="entry name" value="FN3_dom"/>
</dbReference>
<dbReference type="InterPro" id="IPR036116">
    <property type="entry name" value="FN3_sf"/>
</dbReference>
<dbReference type="InterPro" id="IPR007110">
    <property type="entry name" value="Ig-like_dom"/>
</dbReference>
<dbReference type="InterPro" id="IPR036179">
    <property type="entry name" value="Ig-like_dom_sf"/>
</dbReference>
<dbReference type="InterPro" id="IPR013783">
    <property type="entry name" value="Ig-like_fold"/>
</dbReference>
<dbReference type="InterPro" id="IPR013098">
    <property type="entry name" value="Ig_I-set"/>
</dbReference>
<dbReference type="InterPro" id="IPR003599">
    <property type="entry name" value="Ig_sub"/>
</dbReference>
<dbReference type="InterPro" id="IPR003598">
    <property type="entry name" value="Ig_sub2"/>
</dbReference>
<dbReference type="InterPro" id="IPR010560">
    <property type="entry name" value="Neogenin_C"/>
</dbReference>
<dbReference type="PANTHER" id="PTHR44170:SF14">
    <property type="entry name" value="NEOGENIN"/>
    <property type="match status" value="1"/>
</dbReference>
<dbReference type="PANTHER" id="PTHR44170">
    <property type="entry name" value="PROTEIN SIDEKICK"/>
    <property type="match status" value="1"/>
</dbReference>
<dbReference type="Pfam" id="PF00041">
    <property type="entry name" value="fn3"/>
    <property type="match status" value="6"/>
</dbReference>
<dbReference type="Pfam" id="PF07679">
    <property type="entry name" value="I-set"/>
    <property type="match status" value="2"/>
</dbReference>
<dbReference type="Pfam" id="PF13895">
    <property type="entry name" value="Ig_2"/>
    <property type="match status" value="1"/>
</dbReference>
<dbReference type="Pfam" id="PF13927">
    <property type="entry name" value="Ig_3"/>
    <property type="match status" value="1"/>
</dbReference>
<dbReference type="Pfam" id="PF06583">
    <property type="entry name" value="Neogenin_C"/>
    <property type="match status" value="1"/>
</dbReference>
<dbReference type="PRINTS" id="PR00014">
    <property type="entry name" value="FNTYPEIII"/>
</dbReference>
<dbReference type="SMART" id="SM00060">
    <property type="entry name" value="FN3"/>
    <property type="match status" value="6"/>
</dbReference>
<dbReference type="SMART" id="SM00409">
    <property type="entry name" value="IG"/>
    <property type="match status" value="4"/>
</dbReference>
<dbReference type="SMART" id="SM00408">
    <property type="entry name" value="IGc2"/>
    <property type="match status" value="4"/>
</dbReference>
<dbReference type="SUPFAM" id="SSF49265">
    <property type="entry name" value="Fibronectin type III"/>
    <property type="match status" value="4"/>
</dbReference>
<dbReference type="SUPFAM" id="SSF48726">
    <property type="entry name" value="Immunoglobulin"/>
    <property type="match status" value="4"/>
</dbReference>
<dbReference type="PROSITE" id="PS50853">
    <property type="entry name" value="FN3"/>
    <property type="match status" value="6"/>
</dbReference>
<dbReference type="PROSITE" id="PS50835">
    <property type="entry name" value="IG_LIKE"/>
    <property type="match status" value="4"/>
</dbReference>
<gene>
    <name type="primary">NEO1</name>
    <name type="synonym">IGDCC2</name>
    <name type="synonym">NGN</name>
</gene>
<organism>
    <name type="scientific">Homo sapiens</name>
    <name type="common">Human</name>
    <dbReference type="NCBI Taxonomy" id="9606"/>
    <lineage>
        <taxon>Eukaryota</taxon>
        <taxon>Metazoa</taxon>
        <taxon>Chordata</taxon>
        <taxon>Craniata</taxon>
        <taxon>Vertebrata</taxon>
        <taxon>Euteleostomi</taxon>
        <taxon>Mammalia</taxon>
        <taxon>Eutheria</taxon>
        <taxon>Euarchontoglires</taxon>
        <taxon>Primates</taxon>
        <taxon>Haplorrhini</taxon>
        <taxon>Catarrhini</taxon>
        <taxon>Hominidae</taxon>
        <taxon>Homo</taxon>
    </lineage>
</organism>